<feature type="chain" id="PRO_1000047409" description="Glycine--tRNA ligase alpha subunit">
    <location>
        <begin position="1"/>
        <end position="287"/>
    </location>
</feature>
<feature type="helix" evidence="2">
    <location>
        <begin position="3"/>
        <end position="15"/>
    </location>
</feature>
<feature type="turn" evidence="2">
    <location>
        <begin position="16"/>
        <end position="18"/>
    </location>
</feature>
<feature type="helix" evidence="2">
    <location>
        <begin position="32"/>
        <end position="34"/>
    </location>
</feature>
<feature type="helix" evidence="2">
    <location>
        <begin position="36"/>
        <end position="39"/>
    </location>
</feature>
<feature type="turn" evidence="2">
    <location>
        <begin position="40"/>
        <end position="42"/>
    </location>
</feature>
<feature type="strand" evidence="2">
    <location>
        <begin position="43"/>
        <end position="46"/>
    </location>
</feature>
<feature type="strand" evidence="2">
    <location>
        <begin position="48"/>
        <end position="57"/>
    </location>
</feature>
<feature type="helix" evidence="2">
    <location>
        <begin position="59"/>
        <end position="61"/>
    </location>
</feature>
<feature type="strand" evidence="2">
    <location>
        <begin position="72"/>
        <end position="83"/>
    </location>
</feature>
<feature type="helix" evidence="2">
    <location>
        <begin position="88"/>
        <end position="98"/>
    </location>
</feature>
<feature type="helix" evidence="2">
    <location>
        <begin position="103"/>
        <end position="105"/>
    </location>
</feature>
<feature type="strand" evidence="2">
    <location>
        <begin position="108"/>
        <end position="112"/>
    </location>
</feature>
<feature type="strand" evidence="2">
    <location>
        <begin position="115"/>
        <end position="117"/>
    </location>
</feature>
<feature type="turn" evidence="2">
    <location>
        <begin position="118"/>
        <end position="121"/>
    </location>
</feature>
<feature type="strand" evidence="2">
    <location>
        <begin position="122"/>
        <end position="131"/>
    </location>
</feature>
<feature type="strand" evidence="2">
    <location>
        <begin position="134"/>
        <end position="145"/>
    </location>
</feature>
<feature type="strand" evidence="2">
    <location>
        <begin position="155"/>
        <end position="160"/>
    </location>
</feature>
<feature type="helix" evidence="2">
    <location>
        <begin position="161"/>
        <end position="168"/>
    </location>
</feature>
<feature type="helix" evidence="2">
    <location>
        <begin position="174"/>
        <end position="176"/>
    </location>
</feature>
<feature type="strand" evidence="2">
    <location>
        <begin position="177"/>
        <end position="182"/>
    </location>
</feature>
<feature type="strand" evidence="2">
    <location>
        <begin position="185"/>
        <end position="188"/>
    </location>
</feature>
<feature type="helix" evidence="2">
    <location>
        <begin position="189"/>
        <end position="206"/>
    </location>
</feature>
<feature type="helix" evidence="2">
    <location>
        <begin position="210"/>
        <end position="229"/>
    </location>
</feature>
<feature type="helix" evidence="2">
    <location>
        <begin position="233"/>
        <end position="253"/>
    </location>
</feature>
<feature type="helix" evidence="2">
    <location>
        <begin position="258"/>
        <end position="283"/>
    </location>
</feature>
<accession>A1VZ59</accession>
<name>SYGA_CAMJJ</name>
<comment type="catalytic activity">
    <reaction evidence="1">
        <text>tRNA(Gly) + glycine + ATP = glycyl-tRNA(Gly) + AMP + diphosphate</text>
        <dbReference type="Rhea" id="RHEA:16013"/>
        <dbReference type="Rhea" id="RHEA-COMP:9664"/>
        <dbReference type="Rhea" id="RHEA-COMP:9683"/>
        <dbReference type="ChEBI" id="CHEBI:30616"/>
        <dbReference type="ChEBI" id="CHEBI:33019"/>
        <dbReference type="ChEBI" id="CHEBI:57305"/>
        <dbReference type="ChEBI" id="CHEBI:78442"/>
        <dbReference type="ChEBI" id="CHEBI:78522"/>
        <dbReference type="ChEBI" id="CHEBI:456215"/>
        <dbReference type="EC" id="6.1.1.14"/>
    </reaction>
</comment>
<comment type="subunit">
    <text evidence="1">Tetramer of two alpha and two beta subunits.</text>
</comment>
<comment type="subcellular location">
    <subcellularLocation>
        <location evidence="1">Cytoplasm</location>
    </subcellularLocation>
</comment>
<comment type="similarity">
    <text evidence="1">Belongs to the class-II aminoacyl-tRNA synthetase family.</text>
</comment>
<keyword id="KW-0002">3D-structure</keyword>
<keyword id="KW-0030">Aminoacyl-tRNA synthetase</keyword>
<keyword id="KW-0067">ATP-binding</keyword>
<keyword id="KW-0963">Cytoplasm</keyword>
<keyword id="KW-0436">Ligase</keyword>
<keyword id="KW-0547">Nucleotide-binding</keyword>
<keyword id="KW-0648">Protein biosynthesis</keyword>
<sequence length="287" mass="33058">MTFSQMILNLQNYWQEQGCAIMQPYDMPAGAGTFHPATFLRSLGKKPWAAAYVAPSRRPTDGRYGENPNRLGAYYQFQVLIKPSPDNIQELYLKSLENLGFDLKSHDIRFVEDNWESPSLGAWGLGWEVWLDGMEVTQFTYFQQVGGIAVDLVSAEITYGLERIAMYLQNVDNVYDIVWSEFNGEKIKYADVHKQSEYEFSKYNFEVSDVKILNEQFENSYKECKNILEQGLALPAYDYCMLAAHTFNLLDARGAISVAQRQDYMLKIRELSKNCAEIYKKNLNEAE</sequence>
<evidence type="ECO:0000255" key="1">
    <source>
        <dbReference type="HAMAP-Rule" id="MF_00254"/>
    </source>
</evidence>
<evidence type="ECO:0007829" key="2">
    <source>
        <dbReference type="PDB" id="3RF1"/>
    </source>
</evidence>
<reference key="1">
    <citation type="submission" date="2006-12" db="EMBL/GenBank/DDBJ databases">
        <authorList>
            <person name="Fouts D.E."/>
            <person name="Nelson K.E."/>
            <person name="Sebastian Y."/>
        </authorList>
    </citation>
    <scope>NUCLEOTIDE SEQUENCE [LARGE SCALE GENOMIC DNA]</scope>
    <source>
        <strain>81-176</strain>
    </source>
</reference>
<gene>
    <name evidence="1" type="primary">glyQ</name>
    <name type="ordered locus">CJJ81176_0727</name>
</gene>
<protein>
    <recommendedName>
        <fullName evidence="1">Glycine--tRNA ligase alpha subunit</fullName>
        <ecNumber evidence="1">6.1.1.14</ecNumber>
    </recommendedName>
    <alternativeName>
        <fullName evidence="1">Glycyl-tRNA synthetase alpha subunit</fullName>
        <shortName evidence="1">GlyRS</shortName>
    </alternativeName>
</protein>
<dbReference type="EC" id="6.1.1.14" evidence="1"/>
<dbReference type="EMBL" id="CP000538">
    <property type="protein sequence ID" value="EAQ72455.1"/>
    <property type="molecule type" value="Genomic_DNA"/>
</dbReference>
<dbReference type="RefSeq" id="WP_002852069.1">
    <property type="nucleotide sequence ID" value="NC_008787.1"/>
</dbReference>
<dbReference type="PDB" id="3RF1">
    <property type="method" value="X-ray"/>
    <property type="resolution" value="2.20 A"/>
    <property type="chains" value="A/B=1-287"/>
</dbReference>
<dbReference type="PDBsum" id="3RF1"/>
<dbReference type="SMR" id="A1VZ59"/>
<dbReference type="KEGG" id="cjj:CJJ81176_0727"/>
<dbReference type="eggNOG" id="COG0752">
    <property type="taxonomic scope" value="Bacteria"/>
</dbReference>
<dbReference type="HOGENOM" id="CLU_057066_1_0_7"/>
<dbReference type="EvolutionaryTrace" id="A1VZ59"/>
<dbReference type="Proteomes" id="UP000000646">
    <property type="component" value="Chromosome"/>
</dbReference>
<dbReference type="GO" id="GO:0005829">
    <property type="term" value="C:cytosol"/>
    <property type="evidence" value="ECO:0007669"/>
    <property type="project" value="TreeGrafter"/>
</dbReference>
<dbReference type="GO" id="GO:0005524">
    <property type="term" value="F:ATP binding"/>
    <property type="evidence" value="ECO:0007669"/>
    <property type="project" value="UniProtKB-UniRule"/>
</dbReference>
<dbReference type="GO" id="GO:0004820">
    <property type="term" value="F:glycine-tRNA ligase activity"/>
    <property type="evidence" value="ECO:0007669"/>
    <property type="project" value="UniProtKB-UniRule"/>
</dbReference>
<dbReference type="GO" id="GO:0006426">
    <property type="term" value="P:glycyl-tRNA aminoacylation"/>
    <property type="evidence" value="ECO:0007669"/>
    <property type="project" value="UniProtKB-UniRule"/>
</dbReference>
<dbReference type="CDD" id="cd00733">
    <property type="entry name" value="GlyRS_alpha_core"/>
    <property type="match status" value="1"/>
</dbReference>
<dbReference type="FunFam" id="3.30.930.10:FF:000006">
    <property type="entry name" value="Glycine--tRNA ligase alpha subunit"/>
    <property type="match status" value="1"/>
</dbReference>
<dbReference type="Gene3D" id="3.30.930.10">
    <property type="entry name" value="Bira Bifunctional Protein, Domain 2"/>
    <property type="match status" value="1"/>
</dbReference>
<dbReference type="Gene3D" id="1.20.58.180">
    <property type="entry name" value="Class II aaRS and biotin synthetases, domain 2"/>
    <property type="match status" value="1"/>
</dbReference>
<dbReference type="HAMAP" id="MF_00254">
    <property type="entry name" value="Gly_tRNA_synth_alpha"/>
    <property type="match status" value="1"/>
</dbReference>
<dbReference type="InterPro" id="IPR045864">
    <property type="entry name" value="aa-tRNA-synth_II/BPL/LPL"/>
</dbReference>
<dbReference type="InterPro" id="IPR006194">
    <property type="entry name" value="Gly-tRNA-synth_heterodimer"/>
</dbReference>
<dbReference type="InterPro" id="IPR002310">
    <property type="entry name" value="Gly-tRNA_ligase_asu"/>
</dbReference>
<dbReference type="NCBIfam" id="TIGR00388">
    <property type="entry name" value="glyQ"/>
    <property type="match status" value="1"/>
</dbReference>
<dbReference type="NCBIfam" id="NF006827">
    <property type="entry name" value="PRK09348.1"/>
    <property type="match status" value="1"/>
</dbReference>
<dbReference type="PANTHER" id="PTHR30075:SF2">
    <property type="entry name" value="GLYCINE--TRNA LIGASE, CHLOROPLASTIC_MITOCHONDRIAL 2"/>
    <property type="match status" value="1"/>
</dbReference>
<dbReference type="PANTHER" id="PTHR30075">
    <property type="entry name" value="GLYCYL-TRNA SYNTHETASE"/>
    <property type="match status" value="1"/>
</dbReference>
<dbReference type="Pfam" id="PF02091">
    <property type="entry name" value="tRNA-synt_2e"/>
    <property type="match status" value="1"/>
</dbReference>
<dbReference type="PRINTS" id="PR01044">
    <property type="entry name" value="TRNASYNTHGA"/>
</dbReference>
<dbReference type="SUPFAM" id="SSF55681">
    <property type="entry name" value="Class II aaRS and biotin synthetases"/>
    <property type="match status" value="1"/>
</dbReference>
<dbReference type="PROSITE" id="PS50861">
    <property type="entry name" value="AA_TRNA_LIGASE_II_GLYAB"/>
    <property type="match status" value="1"/>
</dbReference>
<proteinExistence type="evidence at protein level"/>
<organism>
    <name type="scientific">Campylobacter jejuni subsp. jejuni serotype O:23/36 (strain 81-176)</name>
    <dbReference type="NCBI Taxonomy" id="354242"/>
    <lineage>
        <taxon>Bacteria</taxon>
        <taxon>Pseudomonadati</taxon>
        <taxon>Campylobacterota</taxon>
        <taxon>Epsilonproteobacteria</taxon>
        <taxon>Campylobacterales</taxon>
        <taxon>Campylobacteraceae</taxon>
        <taxon>Campylobacter</taxon>
    </lineage>
</organism>